<evidence type="ECO:0000250" key="1"/>
<evidence type="ECO:0000255" key="2"/>
<evidence type="ECO:0000255" key="3">
    <source>
        <dbReference type="PROSITE-ProRule" id="PRU00288"/>
    </source>
</evidence>
<evidence type="ECO:0000256" key="4">
    <source>
        <dbReference type="SAM" id="MobiDB-lite"/>
    </source>
</evidence>
<reference key="1">
    <citation type="submission" date="2006-10" db="EMBL/GenBank/DDBJ databases">
        <authorList>
            <consortium name="Sanger Xenopus tropicalis EST/cDNA project"/>
        </authorList>
    </citation>
    <scope>NUCLEOTIDE SEQUENCE [LARGE SCALE MRNA]</scope>
    <source>
        <tissue>Egg</tissue>
    </source>
</reference>
<reference key="2">
    <citation type="submission" date="2006-09" db="EMBL/GenBank/DDBJ databases">
        <authorList>
            <consortium name="NIH - Xenopus Gene Collection (XGC) project"/>
        </authorList>
    </citation>
    <scope>NUCLEOTIDE SEQUENCE [LARGE SCALE MRNA]</scope>
    <source>
        <tissue>Brain</tissue>
    </source>
</reference>
<gene>
    <name type="primary">arfgap2</name>
    <name type="synonym">znf289</name>
    <name type="ORF">TEgg043a17.1</name>
</gene>
<name>ARFG2_XENTR</name>
<keyword id="KW-0175">Coiled coil</keyword>
<keyword id="KW-0963">Cytoplasm</keyword>
<keyword id="KW-0931">ER-Golgi transport</keyword>
<keyword id="KW-0333">Golgi apparatus</keyword>
<keyword id="KW-0343">GTPase activation</keyword>
<keyword id="KW-0472">Membrane</keyword>
<keyword id="KW-0479">Metal-binding</keyword>
<keyword id="KW-0653">Protein transport</keyword>
<keyword id="KW-1185">Reference proteome</keyword>
<keyword id="KW-0813">Transport</keyword>
<keyword id="KW-0862">Zinc</keyword>
<keyword id="KW-0863">Zinc-finger</keyword>
<comment type="function">
    <text evidence="1">GTPase-activating protein (GAP) for ADP ribosylation factor 1 (ARF1). Implicated in coatomer-mediated protein transport between the Golgi complex and the endoplasmic reticulum. Hydrolysis of ARF1-bound GTP may lead to dissociation of coatomer from Golgi-derived membranes to allow fusion with target membranes (By similarity).</text>
</comment>
<comment type="subunit">
    <text evidence="1">Interacts with the coatomer complex. Interacts with the C-terminal appendage domain of COPG1 (By similarity).</text>
</comment>
<comment type="subcellular location">
    <subcellularLocation>
        <location evidence="1">Cytoplasm</location>
    </subcellularLocation>
    <subcellularLocation>
        <location evidence="1">Golgi apparatus membrane</location>
        <topology evidence="1">Peripheral membrane protein</topology>
        <orientation evidence="1">Cytoplasmic side</orientation>
    </subcellularLocation>
    <text evidence="1">Also found on peripheral punctate structures likely to be endoplasmic reticulum-Golgi intermediate compartment.</text>
</comment>
<dbReference type="EMBL" id="CR926298">
    <property type="protein sequence ID" value="CAJ81762.1"/>
    <property type="molecule type" value="mRNA"/>
</dbReference>
<dbReference type="EMBL" id="BC122890">
    <property type="protein sequence ID" value="AAI22891.1"/>
    <property type="molecule type" value="mRNA"/>
</dbReference>
<dbReference type="SMR" id="Q28CM8"/>
<dbReference type="FunCoup" id="Q28CM8">
    <property type="interactions" value="3462"/>
</dbReference>
<dbReference type="STRING" id="8364.ENSXETP00000026881"/>
<dbReference type="PaxDb" id="8364-ENSXETP00000011114"/>
<dbReference type="eggNOG" id="KOG0706">
    <property type="taxonomic scope" value="Eukaryota"/>
</dbReference>
<dbReference type="InParanoid" id="Q28CM8"/>
<dbReference type="Proteomes" id="UP000008143">
    <property type="component" value="Unplaced"/>
</dbReference>
<dbReference type="Bgee" id="ENSXETG00000005097">
    <property type="expression patterns" value="Expressed in gastrula and 27 other cell types or tissues"/>
</dbReference>
<dbReference type="GO" id="GO:0000139">
    <property type="term" value="C:Golgi membrane"/>
    <property type="evidence" value="ECO:0007669"/>
    <property type="project" value="UniProtKB-SubCell"/>
</dbReference>
<dbReference type="GO" id="GO:0005096">
    <property type="term" value="F:GTPase activator activity"/>
    <property type="evidence" value="ECO:0007669"/>
    <property type="project" value="UniProtKB-KW"/>
</dbReference>
<dbReference type="GO" id="GO:0008270">
    <property type="term" value="F:zinc ion binding"/>
    <property type="evidence" value="ECO:0007669"/>
    <property type="project" value="UniProtKB-KW"/>
</dbReference>
<dbReference type="GO" id="GO:0015031">
    <property type="term" value="P:protein transport"/>
    <property type="evidence" value="ECO:0007669"/>
    <property type="project" value="UniProtKB-KW"/>
</dbReference>
<dbReference type="GO" id="GO:0016192">
    <property type="term" value="P:vesicle-mediated transport"/>
    <property type="evidence" value="ECO:0007669"/>
    <property type="project" value="UniProtKB-KW"/>
</dbReference>
<dbReference type="CDD" id="cd09029">
    <property type="entry name" value="ArfGap_ArfGap2"/>
    <property type="match status" value="1"/>
</dbReference>
<dbReference type="FunFam" id="1.10.220.150:FF:000004">
    <property type="entry name" value="Putative ADP-ribosylation factor GTPase-activating protein 2"/>
    <property type="match status" value="1"/>
</dbReference>
<dbReference type="Gene3D" id="1.10.220.150">
    <property type="entry name" value="Arf GTPase activating protein"/>
    <property type="match status" value="1"/>
</dbReference>
<dbReference type="InterPro" id="IPR037278">
    <property type="entry name" value="ARFGAP/RecO"/>
</dbReference>
<dbReference type="InterPro" id="IPR001164">
    <property type="entry name" value="ArfGAP_dom"/>
</dbReference>
<dbReference type="InterPro" id="IPR038508">
    <property type="entry name" value="ArfGAP_dom_sf"/>
</dbReference>
<dbReference type="PANTHER" id="PTHR45686">
    <property type="entry name" value="ADP-RIBOSYLATION FACTOR GTPASE ACTIVATING PROTEIN 3, ISOFORM H-RELATED"/>
    <property type="match status" value="1"/>
</dbReference>
<dbReference type="PANTHER" id="PTHR45686:SF10">
    <property type="entry name" value="ADP-RIBOSYLATION FACTOR GTPASE-ACTIVATING PROTEIN 2"/>
    <property type="match status" value="1"/>
</dbReference>
<dbReference type="Pfam" id="PF01412">
    <property type="entry name" value="ArfGap"/>
    <property type="match status" value="1"/>
</dbReference>
<dbReference type="PRINTS" id="PR00405">
    <property type="entry name" value="REVINTRACTNG"/>
</dbReference>
<dbReference type="SMART" id="SM00105">
    <property type="entry name" value="ArfGap"/>
    <property type="match status" value="1"/>
</dbReference>
<dbReference type="SUPFAM" id="SSF57863">
    <property type="entry name" value="ArfGap/RecO-like zinc finger"/>
    <property type="match status" value="1"/>
</dbReference>
<dbReference type="PROSITE" id="PS50115">
    <property type="entry name" value="ARFGAP"/>
    <property type="match status" value="1"/>
</dbReference>
<protein>
    <recommendedName>
        <fullName>ADP-ribosylation factor GTPase-activating protein 2</fullName>
        <shortName>ARF GAP 2</shortName>
    </recommendedName>
    <alternativeName>
        <fullName>GTPase-activating protein ZNF289</fullName>
    </alternativeName>
    <alternativeName>
        <fullName>Zinc finger protein 289</fullName>
    </alternativeName>
</protein>
<organism>
    <name type="scientific">Xenopus tropicalis</name>
    <name type="common">Western clawed frog</name>
    <name type="synonym">Silurana tropicalis</name>
    <dbReference type="NCBI Taxonomy" id="8364"/>
    <lineage>
        <taxon>Eukaryota</taxon>
        <taxon>Metazoa</taxon>
        <taxon>Chordata</taxon>
        <taxon>Craniata</taxon>
        <taxon>Vertebrata</taxon>
        <taxon>Euteleostomi</taxon>
        <taxon>Amphibia</taxon>
        <taxon>Batrachia</taxon>
        <taxon>Anura</taxon>
        <taxon>Pipoidea</taxon>
        <taxon>Pipidae</taxon>
        <taxon>Xenopodinae</taxon>
        <taxon>Xenopus</taxon>
        <taxon>Silurana</taxon>
    </lineage>
</organism>
<proteinExistence type="evidence at transcript level"/>
<sequence length="526" mass="57224">MAAEPTKAEIQAVFKRLRAAPTNKSCFDCGAKNPSWASIPYGVFLCIDCSGVHRSLGVHLSFIRSTELDSNWSWFQLRCMQVGGNASANAFFHQHGATTSDTNAKYNSRSAQMYREKIRQLANAAMSKHGTDLWIDGMNCALVQPAEKKESDFFAEMTQPSSSWEATPASEPTSTTVTTVTRTISSPETADSASAECGPSVDILSTSPKAAVEVKPSLIGKKKVNTAKKGLGAKKGLGAQKVSSQSFSEIERRAQVAEKLREQQAAELKKEAEESLVSSMRLAYQELQIDRKQEEKKLQNLEGKKREQAERLGMGLAARSSISHSLLSEMHVIEQETPVANKSSRSQLDLLEDASFTSGPPKYKDNPFSLGDGFSSRWETESSSWGSADKAEEEREVTISSIQPARDRPANRRKPEGAPAPESNEARMKFASAKAISSDMFFGRENDAEYEARSRLQQLSSSNSISSADLFGDPNAVNLSGGVSLGNVMPAADITHFKQGVKSVAGKMAVLANGVMNSLQDRYSSY</sequence>
<accession>Q28CM8</accession>
<feature type="chain" id="PRO_0000278472" description="ADP-ribosylation factor GTPase-activating protein 2">
    <location>
        <begin position="1"/>
        <end position="526"/>
    </location>
</feature>
<feature type="domain" description="Arf-GAP" evidence="3">
    <location>
        <begin position="11"/>
        <end position="127"/>
    </location>
</feature>
<feature type="zinc finger region" description="C4-type" evidence="3">
    <location>
        <begin position="26"/>
        <end position="49"/>
    </location>
</feature>
<feature type="region of interest" description="Required for interaction with coatomer" evidence="1">
    <location>
        <begin position="97"/>
        <end position="526"/>
    </location>
</feature>
<feature type="region of interest" description="Disordered" evidence="4">
    <location>
        <begin position="159"/>
        <end position="180"/>
    </location>
</feature>
<feature type="region of interest" description="Disordered" evidence="4">
    <location>
        <begin position="354"/>
        <end position="426"/>
    </location>
</feature>
<feature type="coiled-coil region" evidence="2">
    <location>
        <begin position="247"/>
        <end position="314"/>
    </location>
</feature>
<feature type="compositionally biased region" description="Low complexity" evidence="4">
    <location>
        <begin position="165"/>
        <end position="180"/>
    </location>
</feature>
<feature type="compositionally biased region" description="Basic and acidic residues" evidence="4">
    <location>
        <begin position="405"/>
        <end position="416"/>
    </location>
</feature>